<name>NU154_DROME</name>
<proteinExistence type="evidence at protein level"/>
<comment type="function">
    <text evidence="1 2 3 4 5 6 7 8">Component of the nuclear pore complex (PubMed:17410542). Has a role in the organization of the inner nuclear membrane proteins at the nuclear envelope (PubMed:22718353). In germ cells, plays a role in the nuclear localization of components of the dpp signaling pathways, such as Medea and phosphorylated Mad (PubMed:21696798). Binds to chromatin, and together with Nup62 and Nup93-1, contributes to karyosome morphology and chromatin organization including attachment to the nuclear envelope in oocytes and nurse cells (PubMed:22718353, PubMed:26341556). Has a role in female fertility including egg chamber development; in nurse cells, has a role in the organization of F-actin in subcortical and cytoplasmic actin filaments important for the transfer of cytoplasm from nurse cells to the growing oocytes (PubMed:10511559, PubMed:17277377, PubMed:17410542, PubMed:9732281). Has a role in male spermatogenesis and fertility (PubMed:10511559, PubMed:9732281). Has a role in germ line cell proliferation (PubMed:21696798).</text>
</comment>
<comment type="subunit">
    <text evidence="2 5">Interacts (via N-terminus) with Nup93-1 (PubMed:22718353). Interacts with Nup35 (PubMed:22718353). Interacts with cup (PubMed:17277377).</text>
</comment>
<comment type="interaction">
    <interactant intactId="EBI-118619">
        <id>Q9V463</id>
    </interactant>
    <interactant intactId="EBI-3430080">
        <id>Q9VWS2</id>
        <label>Nup35</label>
    </interactant>
    <organismsDiffer>false</organismsDiffer>
    <experiments>2</experiments>
</comment>
<comment type="interaction">
    <interactant intactId="EBI-118619">
        <id>Q9V463</id>
    </interactant>
    <interactant intactId="EBI-179313">
        <id>Q9XZ06</id>
        <label>Nup93-1</label>
    </interactant>
    <organismsDiffer>false</organismsDiffer>
    <experiments>3</experiments>
</comment>
<comment type="subcellular location">
    <subcellularLocation>
        <location evidence="3">Nucleus</location>
        <location evidence="3">Nuclear pore complex</location>
    </subcellularLocation>
    <subcellularLocation>
        <location evidence="5 7">Chromosome</location>
    </subcellularLocation>
    <subcellularLocation>
        <location evidence="3 7">Nucleus</location>
    </subcellularLocation>
    <subcellularLocation>
        <location evidence="2 3 5 7">Nucleus membrane</location>
        <topology evidence="3">Peripheral membrane protein</topology>
        <orientation evidence="3">Cytoplasmic side</orientation>
    </subcellularLocation>
    <subcellularLocation>
        <location evidence="2 3 5 7">Nucleus membrane</location>
        <topology evidence="3">Peripheral membrane protein</topology>
        <orientation evidence="3">Nucleoplasmic side</orientation>
    </subcellularLocation>
    <subcellularLocation>
        <location evidence="3 5">Cytoplasm</location>
    </subcellularLocation>
    <text evidence="3 5">Increased localization to chromatin before interphase (PubMed:22718353). Distributed along filamentous structures that extend radially on the nuclear side of the pore complex (PubMed:17410542).</text>
</comment>
<comment type="developmental stage">
    <text evidence="1 2 3 7">Expressed in embryo (at protein level) (PubMed:9732281). Expressed in ovaries; more specifically in the germarium and throughout egg chamber development both in germ line and nurse cells (at protein level) (PubMed:17277377, PubMed:17410542, PubMed:9732281). Expressed in spermatocytes (at protein level) (PubMed:9732281). In embryos, detected during germ-band elongation and in the developing mesoderm (PubMed:10511559). At stage 11, mostly prominent in the central nervous system and gut (PubMed:10511559). By stage 14, detected in the brain and dorsal vessel (PubMed:10511559). At the end of embryogenesis restricted to lymph glands (hematopoietic organ), gonadal germline and specific neurons in the brain (PubMed:10511559). In larvae, detected in the imaginal disks, certain regions of the brain and all tissues containing dividing cells (PubMed:10511559). In larval, detected in testes and in all germline cells up through the meiotic stages (PubMed:10511559). In adult, detected in testes, ovaries in germanium region 2 and throughout later stage of oogenesis (PubMed:10511559).</text>
</comment>
<comment type="disruption phenotype">
    <text evidence="1 4 6">Embryonic lethal (PubMed:10511559). RNAi-mediated knockdown results in failed nuclear import of phosphorylated Mad in response to activation of the dpp signaling cascade (PubMed:21696798). RNAi-mediated knockdown results in altered karyosome morphology, in the reduction of Nup62 association with the nuclear envelope and its accumulation in the cytoplasm (PubMed:26341556). RNAi-mediated knockdown of Nup62 in combination with Nup154 rescues the phenotype of the Nup62 knockdown restablishing correct kariosome morphology and chromatin detachment from the nuclear envelope (PubMed:26341556).</text>
</comment>
<comment type="similarity">
    <text evidence="11">Belongs to the non-repetitive/WGA-negative nucleoporin family.</text>
</comment>
<comment type="sequence caution" evidence="11">
    <conflict type="erroneous gene model prediction">
        <sequence resource="EMBL-CDS" id="AAC05385"/>
    </conflict>
</comment>
<comment type="sequence caution" evidence="11">
    <conflict type="erroneous gene model prediction">
        <sequence resource="EMBL-CDS" id="AAC06248"/>
    </conflict>
</comment>
<accession>Q9V463</accession>
<accession>O62536</accession>
<accession>O62610</accession>
<accession>O62613</accession>
<accession>Q9VKL5</accession>
<feature type="chain" id="PRO_0000442728" description="Nuclear pore complex protein Nup154" evidence="11">
    <location>
        <begin position="1"/>
        <end position="1365"/>
    </location>
</feature>
<feature type="region of interest" description="Required for binding to Nup93-1 and anchoring to the nuclear pore complex" evidence="5">
    <location>
        <begin position="1"/>
        <end position="508"/>
    </location>
</feature>
<feature type="region of interest" description="Required for binding to chromatin" evidence="5">
    <location>
        <begin position="508"/>
        <end position="986"/>
    </location>
</feature>
<feature type="sequence conflict" description="In Ref. 1; CAA76635." evidence="11" ref="1">
    <original>V</original>
    <variation>E</variation>
    <location>
        <position position="1003"/>
    </location>
</feature>
<feature type="sequence conflict" description="In Ref. 2; AAC05385/AAC05386/AAC06247/AAC06248." evidence="11" ref="2">
    <original>A</original>
    <variation>P</variation>
    <location>
        <position position="1291"/>
    </location>
</feature>
<organism evidence="20">
    <name type="scientific">Drosophila melanogaster</name>
    <name type="common">Fruit fly</name>
    <dbReference type="NCBI Taxonomy" id="7227"/>
    <lineage>
        <taxon>Eukaryota</taxon>
        <taxon>Metazoa</taxon>
        <taxon>Ecdysozoa</taxon>
        <taxon>Arthropoda</taxon>
        <taxon>Hexapoda</taxon>
        <taxon>Insecta</taxon>
        <taxon>Pterygota</taxon>
        <taxon>Neoptera</taxon>
        <taxon>Endopterygota</taxon>
        <taxon>Diptera</taxon>
        <taxon>Brachycera</taxon>
        <taxon>Muscomorpha</taxon>
        <taxon>Ephydroidea</taxon>
        <taxon>Drosophilidae</taxon>
        <taxon>Drosophila</taxon>
        <taxon>Sophophora</taxon>
    </lineage>
</organism>
<sequence length="1365" mass="153895">MTLPQAQLDFFTTATSMLEWHYNLERNKPGLLELTGVSQHGRATMSGLNDYDYQSLSFLKSDRTHNLQQMRTVTKSAIPNEILEHFKHIKCHCTMGLFPEIGRAWLTIDSEIYIWTFNQTRDVAYYDGLSHLIVSVGLVKPKPGVFVQDVKYLLVLTTPIEVIVLGVTFGESSYNEMQLMNRPVFVIGTDNVSISVIKGTDDGRIFLGGRDGCLYEIYYQAESSWFGKRCKKINLSQGLVSYMVPSFLKVFSEVDPIEHIEIDNSRKLLYVLTEKGVIEAWDISTSYTTARRLGRITQNDITNQAVSLITTVDPSIFKSVKAICPLSADDADKLHLVAVTQCGVRLFFSTTSLNVKQQFGPAVPCSPGENTGFGQPAVQPPLSPNAEAPKGLYLLHVRLPPGYTPNATTNKPKQVHAAHYTEGTMLMITTQQHEQDLLWSLSSAPSVNFTYLVESTALESLDGVVWGLAEVHEPSTPQRKSPLNSARHARKVALLTNQGTHIIEVLKMVDVLRQILLSCNGPHHEEVKMFFQSQNQREACVTALLLATSDTYRGSDVALWAAQAFMLYGGEPCYQHQKFLNASNRNMANQTLGPNTTNVRERQSMFMSTPMPNSVANSPVGFPGSQFNQPISPIGNMQPPQVAVSNENSPIVFSAKHDGLYMYVSRMLHSVWQMRCVNEQFCSNLSQSECALLLSDLRSLRSFLEVHSVHDISSTTRVSFDNHLDRTNSYNTIMMGNTLLPIPEQRVLSEQAQVEETRSLSALNLFVKHACEVISLWNILNSHSFQLICVQLSPEHQKLLTCSTFRDLLITRSEVCAFLIISLINLYLKDAAGVSEVSKNLRENCPNLYRHEDDVTYKATELLMNAKNCTSATEKEHMLRTTLHMCKEAAPTLPLHSICMQFISADFFEGVIELSAVCASKSDPEEVGVHFYNNGEPADDREGYTCFATRMAYYKEVQLMLDHIYQRVCNKTHVQDKSINPLKGTAKASDAKNGATQTIPKIVAHTLKVKDPLIHITLYEWLLAHDMLKELLDVVEPSLGEFLRRSVSQNVDNVVLIDLLWKYYEKNSHHSQAAHILDNLAMTRSENINLEQRIEYLVRAVMCMRNGNVGSSLSNGIFLKELEDKLDIARVQKSVLAAMTELASDKLEAATAVKELNYALYDITQLYQHFAEPFDLWECQLSILNCSHHNDPLLIESVWGQIINSVVDKPGTTSERCNRLFTKIEILVREYGESGVCFPFAFLIRELEVKACQLRFPEGIVPEKLVSMNLDIELLLEYYSRMISMNERVWANEGNEWHLIQSVIRVVSLLADNAQSIWYRSKRRIVGKAQDIVAGCLNICYQKPDTNRLQHSLKELQSQLQRLLI</sequence>
<evidence type="ECO:0000269" key="1">
    <source>
    </source>
</evidence>
<evidence type="ECO:0000269" key="2">
    <source>
    </source>
</evidence>
<evidence type="ECO:0000269" key="3">
    <source>
    </source>
</evidence>
<evidence type="ECO:0000269" key="4">
    <source>
    </source>
</evidence>
<evidence type="ECO:0000269" key="5">
    <source>
    </source>
</evidence>
<evidence type="ECO:0000269" key="6">
    <source>
    </source>
</evidence>
<evidence type="ECO:0000269" key="7">
    <source>
    </source>
</evidence>
<evidence type="ECO:0000303" key="8">
    <source>
    </source>
</evidence>
<evidence type="ECO:0000303" key="9">
    <source>
    </source>
</evidence>
<evidence type="ECO:0000303" key="10">
    <source>
    </source>
</evidence>
<evidence type="ECO:0000305" key="11"/>
<evidence type="ECO:0000312" key="12">
    <source>
        <dbReference type="EMBL" id="AAC05385.1"/>
    </source>
</evidence>
<evidence type="ECO:0000312" key="13">
    <source>
        <dbReference type="EMBL" id="AAC05386.1"/>
    </source>
</evidence>
<evidence type="ECO:0000312" key="14">
    <source>
        <dbReference type="EMBL" id="AAC06247.1"/>
    </source>
</evidence>
<evidence type="ECO:0000312" key="15">
    <source>
        <dbReference type="EMBL" id="AAC06248.1"/>
    </source>
</evidence>
<evidence type="ECO:0000312" key="16">
    <source>
        <dbReference type="EMBL" id="AAD46884.1"/>
    </source>
</evidence>
<evidence type="ECO:0000312" key="17">
    <source>
        <dbReference type="EMBL" id="AAF53051.1"/>
    </source>
</evidence>
<evidence type="ECO:0000312" key="18">
    <source>
        <dbReference type="EMBL" id="CAA76635.1"/>
    </source>
</evidence>
<evidence type="ECO:0000312" key="19">
    <source>
        <dbReference type="FlyBase" id="FBgn0021761"/>
    </source>
</evidence>
<evidence type="ECO:0000312" key="20">
    <source>
        <dbReference type="Proteomes" id="UP000000803"/>
    </source>
</evidence>
<gene>
    <name evidence="10 19" type="primary">Nup154</name>
    <name evidence="9 17" type="synonym">Nup155</name>
    <name evidence="19" type="ORF">CG4579</name>
</gene>
<keyword id="KW-0158">Chromosome</keyword>
<keyword id="KW-0963">Cytoplasm</keyword>
<keyword id="KW-0472">Membrane</keyword>
<keyword id="KW-0509">mRNA transport</keyword>
<keyword id="KW-0906">Nuclear pore complex</keyword>
<keyword id="KW-0539">Nucleus</keyword>
<keyword id="KW-0653">Protein transport</keyword>
<keyword id="KW-1185">Reference proteome</keyword>
<keyword id="KW-0811">Translocation</keyword>
<keyword id="KW-0813">Transport</keyword>
<dbReference type="EMBL" id="Y17111">
    <property type="protein sequence ID" value="CAA76635.1"/>
    <property type="molecule type" value="mRNA"/>
</dbReference>
<dbReference type="EMBL" id="AF051397">
    <property type="protein sequence ID" value="AAC05385.1"/>
    <property type="status" value="ALT_SEQ"/>
    <property type="molecule type" value="mRNA"/>
</dbReference>
<dbReference type="EMBL" id="AF051398">
    <property type="protein sequence ID" value="AAC05386.1"/>
    <property type="molecule type" value="mRNA"/>
</dbReference>
<dbReference type="EMBL" id="AF051396">
    <property type="protein sequence ID" value="AAC06247.1"/>
    <property type="molecule type" value="Genomic_DNA"/>
</dbReference>
<dbReference type="EMBL" id="AF051396">
    <property type="protein sequence ID" value="AAC06248.1"/>
    <property type="status" value="ALT_SEQ"/>
    <property type="molecule type" value="Genomic_DNA"/>
</dbReference>
<dbReference type="EMBL" id="AE014134">
    <property type="protein sequence ID" value="AAF53050.3"/>
    <property type="molecule type" value="Genomic_DNA"/>
</dbReference>
<dbReference type="EMBL" id="AE014134">
    <property type="protein sequence ID" value="AAF53051.1"/>
    <property type="molecule type" value="Genomic_DNA"/>
</dbReference>
<dbReference type="EMBL" id="AE014134">
    <property type="protein sequence ID" value="AHN54341.1"/>
    <property type="molecule type" value="Genomic_DNA"/>
</dbReference>
<dbReference type="EMBL" id="AF160944">
    <property type="protein sequence ID" value="AAD46884.1"/>
    <property type="molecule type" value="mRNA"/>
</dbReference>
<dbReference type="PIR" id="T13031">
    <property type="entry name" value="T13031"/>
</dbReference>
<dbReference type="PIR" id="T13991">
    <property type="entry name" value="T13991"/>
</dbReference>
<dbReference type="RefSeq" id="NP_001285827.1">
    <property type="nucleotide sequence ID" value="NM_001298898.1"/>
</dbReference>
<dbReference type="RefSeq" id="NP_477287.1">
    <property type="nucleotide sequence ID" value="NM_057939.4"/>
</dbReference>
<dbReference type="RefSeq" id="NP_477288.3">
    <property type="nucleotide sequence ID" value="NM_057940.4"/>
</dbReference>
<dbReference type="SMR" id="Q9V463"/>
<dbReference type="ComplexPortal" id="CPX-2568">
    <property type="entry name" value="Nuclear pore complex"/>
</dbReference>
<dbReference type="FunCoup" id="Q9V463">
    <property type="interactions" value="2844"/>
</dbReference>
<dbReference type="IntAct" id="Q9V463">
    <property type="interactions" value="17"/>
</dbReference>
<dbReference type="MINT" id="Q9V463"/>
<dbReference type="STRING" id="7227.FBpp0309200"/>
<dbReference type="PaxDb" id="7227-FBpp0088820"/>
<dbReference type="EnsemblMetazoa" id="FBtr0089881">
    <property type="protein sequence ID" value="FBpp0088820"/>
    <property type="gene ID" value="FBgn0021761"/>
</dbReference>
<dbReference type="EnsemblMetazoa" id="FBtr0340224">
    <property type="protein sequence ID" value="FBpp0309199"/>
    <property type="gene ID" value="FBgn0021761"/>
</dbReference>
<dbReference type="EnsemblMetazoa" id="FBtr0340225">
    <property type="protein sequence ID" value="FBpp0309200"/>
    <property type="gene ID" value="FBgn0021761"/>
</dbReference>
<dbReference type="GeneID" id="34527"/>
<dbReference type="KEGG" id="dme:Dmel_CG4579"/>
<dbReference type="UCSC" id="CG4579-RA">
    <property type="organism name" value="d. melanogaster"/>
</dbReference>
<dbReference type="UCSC" id="CG4579-RB">
    <property type="organism name" value="d. melanogaster"/>
</dbReference>
<dbReference type="AGR" id="FB:FBgn0021761"/>
<dbReference type="CTD" id="34527"/>
<dbReference type="FlyBase" id="FBgn0021761">
    <property type="gene designation" value="Nup154"/>
</dbReference>
<dbReference type="VEuPathDB" id="VectorBase:FBgn0021761"/>
<dbReference type="eggNOG" id="KOG1900">
    <property type="taxonomic scope" value="Eukaryota"/>
</dbReference>
<dbReference type="GeneTree" id="ENSGT00390000016532"/>
<dbReference type="HOGENOM" id="CLU_000429_0_0_1"/>
<dbReference type="InParanoid" id="Q9V463"/>
<dbReference type="OMA" id="SWAPFQK"/>
<dbReference type="OrthoDB" id="338970at2759"/>
<dbReference type="PhylomeDB" id="Q9V463"/>
<dbReference type="Reactome" id="R-DME-159227">
    <property type="pathway name" value="Transport of the SLBP independent Mature mRNA"/>
</dbReference>
<dbReference type="Reactome" id="R-DME-159230">
    <property type="pathway name" value="Transport of the SLBP Dependant Mature mRNA"/>
</dbReference>
<dbReference type="Reactome" id="R-DME-159231">
    <property type="pathway name" value="Transport of Mature mRNA Derived from an Intronless Transcript"/>
</dbReference>
<dbReference type="Reactome" id="R-DME-159236">
    <property type="pathway name" value="Transport of Mature mRNA derived from an Intron-Containing Transcript"/>
</dbReference>
<dbReference type="Reactome" id="R-DME-3108214">
    <property type="pathway name" value="SUMOylation of DNA damage response and repair proteins"/>
</dbReference>
<dbReference type="Reactome" id="R-DME-3301854">
    <property type="pathway name" value="Nuclear Pore Complex (NPC) Disassembly"/>
</dbReference>
<dbReference type="Reactome" id="R-DME-4085377">
    <property type="pathway name" value="SUMOylation of SUMOylation proteins"/>
</dbReference>
<dbReference type="Reactome" id="R-DME-4551638">
    <property type="pathway name" value="SUMOylation of chromatin organization proteins"/>
</dbReference>
<dbReference type="Reactome" id="R-DME-4615885">
    <property type="pathway name" value="SUMOylation of DNA replication proteins"/>
</dbReference>
<dbReference type="Reactome" id="R-DME-5578749">
    <property type="pathway name" value="Transcriptional regulation by small RNAs"/>
</dbReference>
<dbReference type="Reactome" id="R-DME-9615933">
    <property type="pathway name" value="Postmitotic nuclear pore complex (NPC) reformation"/>
</dbReference>
<dbReference type="SignaLink" id="Q9V463"/>
<dbReference type="BioGRID-ORCS" id="34527">
    <property type="hits" value="1 hit in 1 CRISPR screen"/>
</dbReference>
<dbReference type="GenomeRNAi" id="34527"/>
<dbReference type="PRO" id="PR:Q9V463"/>
<dbReference type="Proteomes" id="UP000000803">
    <property type="component" value="Chromosome 2L"/>
</dbReference>
<dbReference type="Bgee" id="FBgn0021761">
    <property type="expression patterns" value="Expressed in egg chamber and 73 other cell types or tissues"/>
</dbReference>
<dbReference type="GO" id="GO:0005694">
    <property type="term" value="C:chromosome"/>
    <property type="evidence" value="ECO:0007669"/>
    <property type="project" value="UniProtKB-SubCell"/>
</dbReference>
<dbReference type="GO" id="GO:0005737">
    <property type="term" value="C:cytoplasm"/>
    <property type="evidence" value="ECO:0000314"/>
    <property type="project" value="UniProtKB"/>
</dbReference>
<dbReference type="GO" id="GO:0005635">
    <property type="term" value="C:nuclear envelope"/>
    <property type="evidence" value="ECO:0000314"/>
    <property type="project" value="UniProtKB"/>
</dbReference>
<dbReference type="GO" id="GO:0031965">
    <property type="term" value="C:nuclear membrane"/>
    <property type="evidence" value="ECO:0007669"/>
    <property type="project" value="UniProtKB-SubCell"/>
</dbReference>
<dbReference type="GO" id="GO:0034399">
    <property type="term" value="C:nuclear periphery"/>
    <property type="evidence" value="ECO:0000314"/>
    <property type="project" value="UniProtKB"/>
</dbReference>
<dbReference type="GO" id="GO:0005643">
    <property type="term" value="C:nuclear pore"/>
    <property type="evidence" value="ECO:0000314"/>
    <property type="project" value="UniProtKB"/>
</dbReference>
<dbReference type="GO" id="GO:0044611">
    <property type="term" value="C:nuclear pore inner ring"/>
    <property type="evidence" value="ECO:0000318"/>
    <property type="project" value="GO_Central"/>
</dbReference>
<dbReference type="GO" id="GO:0005634">
    <property type="term" value="C:nucleus"/>
    <property type="evidence" value="ECO:0000314"/>
    <property type="project" value="UniProtKB"/>
</dbReference>
<dbReference type="GO" id="GO:0003682">
    <property type="term" value="F:chromatin binding"/>
    <property type="evidence" value="ECO:0000314"/>
    <property type="project" value="FlyBase"/>
</dbReference>
<dbReference type="GO" id="GO:0017056">
    <property type="term" value="F:structural constituent of nuclear pore"/>
    <property type="evidence" value="ECO:0000318"/>
    <property type="project" value="GO_Central"/>
</dbReference>
<dbReference type="GO" id="GO:0007015">
    <property type="term" value="P:actin filament organization"/>
    <property type="evidence" value="ECO:0000315"/>
    <property type="project" value="UniProtKB"/>
</dbReference>
<dbReference type="GO" id="GO:0001654">
    <property type="term" value="P:eye development"/>
    <property type="evidence" value="ECO:0000315"/>
    <property type="project" value="UniProtKB"/>
</dbReference>
<dbReference type="GO" id="GO:0007281">
    <property type="term" value="P:germ cell development"/>
    <property type="evidence" value="ECO:0000315"/>
    <property type="project" value="UniProtKB"/>
</dbReference>
<dbReference type="GO" id="GO:0007295">
    <property type="term" value="P:growth of a germarium-derived egg chamber"/>
    <property type="evidence" value="ECO:0000315"/>
    <property type="project" value="UniProtKB"/>
</dbReference>
<dbReference type="GO" id="GO:0007140">
    <property type="term" value="P:male meiotic nuclear division"/>
    <property type="evidence" value="ECO:0000315"/>
    <property type="project" value="UniProtKB"/>
</dbReference>
<dbReference type="GO" id="GO:0051028">
    <property type="term" value="P:mRNA transport"/>
    <property type="evidence" value="ECO:0007669"/>
    <property type="project" value="UniProtKB-KW"/>
</dbReference>
<dbReference type="GO" id="GO:0001555">
    <property type="term" value="P:oocyte growth"/>
    <property type="evidence" value="ECO:0000315"/>
    <property type="project" value="UniProtKB"/>
</dbReference>
<dbReference type="GO" id="GO:0030715">
    <property type="term" value="P:oocyte growth in germarium-derived egg chamber"/>
    <property type="evidence" value="ECO:0000316"/>
    <property type="project" value="UniProtKB"/>
</dbReference>
<dbReference type="GO" id="GO:0030717">
    <property type="term" value="P:oocyte karyosome formation"/>
    <property type="evidence" value="ECO:0000315"/>
    <property type="project" value="UniProtKB"/>
</dbReference>
<dbReference type="GO" id="GO:0048477">
    <property type="term" value="P:oogenesis"/>
    <property type="evidence" value="ECO:0000315"/>
    <property type="project" value="UniProtKB"/>
</dbReference>
<dbReference type="GO" id="GO:0007300">
    <property type="term" value="P:ovarian nurse cell to oocyte transport"/>
    <property type="evidence" value="ECO:0000315"/>
    <property type="project" value="UniProtKB"/>
</dbReference>
<dbReference type="GO" id="GO:1905938">
    <property type="term" value="P:positive regulation of germ cell proliferation"/>
    <property type="evidence" value="ECO:0000315"/>
    <property type="project" value="UniProtKB"/>
</dbReference>
<dbReference type="GO" id="GO:0042307">
    <property type="term" value="P:positive regulation of protein import into nucleus"/>
    <property type="evidence" value="ECO:0000315"/>
    <property type="project" value="UniProtKB"/>
</dbReference>
<dbReference type="GO" id="GO:1900182">
    <property type="term" value="P:positive regulation of protein localization to nucleus"/>
    <property type="evidence" value="ECO:0000314"/>
    <property type="project" value="UniProtKB"/>
</dbReference>
<dbReference type="GO" id="GO:0006606">
    <property type="term" value="P:protein import into nucleus"/>
    <property type="evidence" value="ECO:0000318"/>
    <property type="project" value="GO_Central"/>
</dbReference>
<dbReference type="GO" id="GO:0036228">
    <property type="term" value="P:protein localization to nuclear inner membrane"/>
    <property type="evidence" value="ECO:0000315"/>
    <property type="project" value="FlyBase"/>
</dbReference>
<dbReference type="GO" id="GO:0045477">
    <property type="term" value="P:regulation of nurse cell apoptotic process"/>
    <property type="evidence" value="ECO:0000315"/>
    <property type="project" value="UniProtKB"/>
</dbReference>
<dbReference type="GO" id="GO:1905879">
    <property type="term" value="P:regulation of oogenesis"/>
    <property type="evidence" value="ECO:0000315"/>
    <property type="project" value="UniProtKB"/>
</dbReference>
<dbReference type="GO" id="GO:1905475">
    <property type="term" value="P:regulation of protein localization to membrane"/>
    <property type="evidence" value="ECO:0000315"/>
    <property type="project" value="UniProtKB"/>
</dbReference>
<dbReference type="GO" id="GO:0006405">
    <property type="term" value="P:RNA export from nucleus"/>
    <property type="evidence" value="ECO:0000318"/>
    <property type="project" value="GO_Central"/>
</dbReference>
<dbReference type="GO" id="GO:0007283">
    <property type="term" value="P:spermatogenesis"/>
    <property type="evidence" value="ECO:0000315"/>
    <property type="project" value="UniProtKB"/>
</dbReference>
<dbReference type="GO" id="GO:0000972">
    <property type="term" value="P:transcription-dependent tethering of RNA polymerase II gene DNA at nuclear periphery"/>
    <property type="evidence" value="ECO:0000318"/>
    <property type="project" value="GO_Central"/>
</dbReference>
<dbReference type="GO" id="GO:0035220">
    <property type="term" value="P:wing disc development"/>
    <property type="evidence" value="ECO:0000315"/>
    <property type="project" value="UniProtKB"/>
</dbReference>
<dbReference type="FunFam" id="1.20.120.1880:FF:000003">
    <property type="entry name" value="nuclear pore complex protein Nup155"/>
    <property type="match status" value="1"/>
</dbReference>
<dbReference type="FunFam" id="1.25.40.440:FF:000001">
    <property type="entry name" value="Nuclear pore complex subunit"/>
    <property type="match status" value="1"/>
</dbReference>
<dbReference type="Gene3D" id="1.20.58.1780">
    <property type="match status" value="1"/>
</dbReference>
<dbReference type="Gene3D" id="1.20.120.1880">
    <property type="entry name" value="Nucleoporin, helical C-terminal domain"/>
    <property type="match status" value="1"/>
</dbReference>
<dbReference type="Gene3D" id="1.25.40.440">
    <property type="entry name" value="Nucleoporin, helical domain, central subdomain"/>
    <property type="match status" value="1"/>
</dbReference>
<dbReference type="Gene3D" id="1.25.40.450">
    <property type="entry name" value="Nucleoporin, helical domain, N-terminal subdomain"/>
    <property type="match status" value="1"/>
</dbReference>
<dbReference type="InterPro" id="IPR007187">
    <property type="entry name" value="Nucleoporin_Nup133/Nup155_C"/>
</dbReference>
<dbReference type="InterPro" id="IPR014908">
    <property type="entry name" value="Nucleoporin_Nup133/Nup155_N"/>
</dbReference>
<dbReference type="InterPro" id="IPR004870">
    <property type="entry name" value="Nucleoporin_Nup155"/>
</dbReference>
<dbReference type="InterPro" id="IPR042533">
    <property type="entry name" value="Nucleoporin_Nup155_C_1"/>
</dbReference>
<dbReference type="InterPro" id="IPR042537">
    <property type="entry name" value="Nucleoporin_Nup155_C_2"/>
</dbReference>
<dbReference type="InterPro" id="IPR042538">
    <property type="entry name" value="Nucleoporin_Nup155_C_3"/>
</dbReference>
<dbReference type="PANTHER" id="PTHR10350">
    <property type="entry name" value="NUCLEAR PORE COMPLEX PROTEIN NUP155"/>
    <property type="match status" value="1"/>
</dbReference>
<dbReference type="PANTHER" id="PTHR10350:SF6">
    <property type="entry name" value="NUCLEAR PORE COMPLEX PROTEIN NUP155"/>
    <property type="match status" value="1"/>
</dbReference>
<dbReference type="Pfam" id="PF03177">
    <property type="entry name" value="Nucleoporin_C"/>
    <property type="match status" value="1"/>
</dbReference>
<dbReference type="Pfam" id="PF08801">
    <property type="entry name" value="Nucleoporin_N"/>
    <property type="match status" value="1"/>
</dbReference>
<reference evidence="18" key="1">
    <citation type="journal article" date="1998" name="J. Cell Biol.">
        <title>Nup154, a new Drosophila gene essential for male and female gametogenesis is related to the nup155 vertebrate nucleoporin gene.</title>
        <authorList>
            <person name="Gigliotti S."/>
            <person name="Callaini G."/>
            <person name="Andone S."/>
            <person name="Riparbelli M.G."/>
            <person name="Pernas-Alonso R."/>
            <person name="Hoffmann G."/>
            <person name="Graziani F."/>
            <person name="Malva C."/>
        </authorList>
    </citation>
    <scope>NUCLEOTIDE SEQUENCE [MRNA]</scope>
    <scope>FUNCTION</scope>
    <scope>SUBCELLULAR LOCATION</scope>
    <scope>DEVELOPMENTAL STAGE</scope>
    <source>
        <strain evidence="18">Oregon-R</strain>
        <tissue evidence="18">Embryo</tissue>
    </source>
</reference>
<reference evidence="12 13 14 15" key="2">
    <citation type="journal article" date="1999" name="Genetics">
        <title>Developmental genetics of the essential Drosophila nucleoporin nup154: allelic differences due to an outward-directed promoter in the P-element 3' end.</title>
        <authorList>
            <person name="Kiger A.A."/>
            <person name="Gigliotti S."/>
            <person name="Fuller M.T."/>
        </authorList>
    </citation>
    <scope>NUCLEOTIDE SEQUENCE [GENOMIC DNA / MRNA]</scope>
    <scope>FUNCTION</scope>
    <scope>DEVELOPMENTAL STAGE</scope>
    <scope>DISRUPTION PHENOTYPE</scope>
</reference>
<reference evidence="20" key="3">
    <citation type="journal article" date="2000" name="Science">
        <title>The genome sequence of Drosophila melanogaster.</title>
        <authorList>
            <person name="Adams M.D."/>
            <person name="Celniker S.E."/>
            <person name="Holt R.A."/>
            <person name="Evans C.A."/>
            <person name="Gocayne J.D."/>
            <person name="Amanatides P.G."/>
            <person name="Scherer S.E."/>
            <person name="Li P.W."/>
            <person name="Hoskins R.A."/>
            <person name="Galle R.F."/>
            <person name="George R.A."/>
            <person name="Lewis S.E."/>
            <person name="Richards S."/>
            <person name="Ashburner M."/>
            <person name="Henderson S.N."/>
            <person name="Sutton G.G."/>
            <person name="Wortman J.R."/>
            <person name="Yandell M.D."/>
            <person name="Zhang Q."/>
            <person name="Chen L.X."/>
            <person name="Brandon R.C."/>
            <person name="Rogers Y.-H.C."/>
            <person name="Blazej R.G."/>
            <person name="Champe M."/>
            <person name="Pfeiffer B.D."/>
            <person name="Wan K.H."/>
            <person name="Doyle C."/>
            <person name="Baxter E.G."/>
            <person name="Helt G."/>
            <person name="Nelson C.R."/>
            <person name="Miklos G.L.G."/>
            <person name="Abril J.F."/>
            <person name="Agbayani A."/>
            <person name="An H.-J."/>
            <person name="Andrews-Pfannkoch C."/>
            <person name="Baldwin D."/>
            <person name="Ballew R.M."/>
            <person name="Basu A."/>
            <person name="Baxendale J."/>
            <person name="Bayraktaroglu L."/>
            <person name="Beasley E.M."/>
            <person name="Beeson K.Y."/>
            <person name="Benos P.V."/>
            <person name="Berman B.P."/>
            <person name="Bhandari D."/>
            <person name="Bolshakov S."/>
            <person name="Borkova D."/>
            <person name="Botchan M.R."/>
            <person name="Bouck J."/>
            <person name="Brokstein P."/>
            <person name="Brottier P."/>
            <person name="Burtis K.C."/>
            <person name="Busam D.A."/>
            <person name="Butler H."/>
            <person name="Cadieu E."/>
            <person name="Center A."/>
            <person name="Chandra I."/>
            <person name="Cherry J.M."/>
            <person name="Cawley S."/>
            <person name="Dahlke C."/>
            <person name="Davenport L.B."/>
            <person name="Davies P."/>
            <person name="de Pablos B."/>
            <person name="Delcher A."/>
            <person name="Deng Z."/>
            <person name="Mays A.D."/>
            <person name="Dew I."/>
            <person name="Dietz S.M."/>
            <person name="Dodson K."/>
            <person name="Doup L.E."/>
            <person name="Downes M."/>
            <person name="Dugan-Rocha S."/>
            <person name="Dunkov B.C."/>
            <person name="Dunn P."/>
            <person name="Durbin K.J."/>
            <person name="Evangelista C.C."/>
            <person name="Ferraz C."/>
            <person name="Ferriera S."/>
            <person name="Fleischmann W."/>
            <person name="Fosler C."/>
            <person name="Gabrielian A.E."/>
            <person name="Garg N.S."/>
            <person name="Gelbart W.M."/>
            <person name="Glasser K."/>
            <person name="Glodek A."/>
            <person name="Gong F."/>
            <person name="Gorrell J.H."/>
            <person name="Gu Z."/>
            <person name="Guan P."/>
            <person name="Harris M."/>
            <person name="Harris N.L."/>
            <person name="Harvey D.A."/>
            <person name="Heiman T.J."/>
            <person name="Hernandez J.R."/>
            <person name="Houck J."/>
            <person name="Hostin D."/>
            <person name="Houston K.A."/>
            <person name="Howland T.J."/>
            <person name="Wei M.-H."/>
            <person name="Ibegwam C."/>
            <person name="Jalali M."/>
            <person name="Kalush F."/>
            <person name="Karpen G.H."/>
            <person name="Ke Z."/>
            <person name="Kennison J.A."/>
            <person name="Ketchum K.A."/>
            <person name="Kimmel B.E."/>
            <person name="Kodira C.D."/>
            <person name="Kraft C.L."/>
            <person name="Kravitz S."/>
            <person name="Kulp D."/>
            <person name="Lai Z."/>
            <person name="Lasko P."/>
            <person name="Lei Y."/>
            <person name="Levitsky A.A."/>
            <person name="Li J.H."/>
            <person name="Li Z."/>
            <person name="Liang Y."/>
            <person name="Lin X."/>
            <person name="Liu X."/>
            <person name="Mattei B."/>
            <person name="McIntosh T.C."/>
            <person name="McLeod M.P."/>
            <person name="McPherson D."/>
            <person name="Merkulov G."/>
            <person name="Milshina N.V."/>
            <person name="Mobarry C."/>
            <person name="Morris J."/>
            <person name="Moshrefi A."/>
            <person name="Mount S.M."/>
            <person name="Moy M."/>
            <person name="Murphy B."/>
            <person name="Murphy L."/>
            <person name="Muzny D.M."/>
            <person name="Nelson D.L."/>
            <person name="Nelson D.R."/>
            <person name="Nelson K.A."/>
            <person name="Nixon K."/>
            <person name="Nusskern D.R."/>
            <person name="Pacleb J.M."/>
            <person name="Palazzolo M."/>
            <person name="Pittman G.S."/>
            <person name="Pan S."/>
            <person name="Pollard J."/>
            <person name="Puri V."/>
            <person name="Reese M.G."/>
            <person name="Reinert K."/>
            <person name="Remington K."/>
            <person name="Saunders R.D.C."/>
            <person name="Scheeler F."/>
            <person name="Shen H."/>
            <person name="Shue B.C."/>
            <person name="Siden-Kiamos I."/>
            <person name="Simpson M."/>
            <person name="Skupski M.P."/>
            <person name="Smith T.J."/>
            <person name="Spier E."/>
            <person name="Spradling A.C."/>
            <person name="Stapleton M."/>
            <person name="Strong R."/>
            <person name="Sun E."/>
            <person name="Svirskas R."/>
            <person name="Tector C."/>
            <person name="Turner R."/>
            <person name="Venter E."/>
            <person name="Wang A.H."/>
            <person name="Wang X."/>
            <person name="Wang Z.-Y."/>
            <person name="Wassarman D.A."/>
            <person name="Weinstock G.M."/>
            <person name="Weissenbach J."/>
            <person name="Williams S.M."/>
            <person name="Woodage T."/>
            <person name="Worley K.C."/>
            <person name="Wu D."/>
            <person name="Yang S."/>
            <person name="Yao Q.A."/>
            <person name="Ye J."/>
            <person name="Yeh R.-F."/>
            <person name="Zaveri J.S."/>
            <person name="Zhan M."/>
            <person name="Zhang G."/>
            <person name="Zhao Q."/>
            <person name="Zheng L."/>
            <person name="Zheng X.H."/>
            <person name="Zhong F.N."/>
            <person name="Zhong W."/>
            <person name="Zhou X."/>
            <person name="Zhu S.C."/>
            <person name="Zhu X."/>
            <person name="Smith H.O."/>
            <person name="Gibbs R.A."/>
            <person name="Myers E.W."/>
            <person name="Rubin G.M."/>
            <person name="Venter J.C."/>
        </authorList>
    </citation>
    <scope>NUCLEOTIDE SEQUENCE [LARGE SCALE GENOMIC DNA]</scope>
    <source>
        <strain evidence="20">Berkeley</strain>
    </source>
</reference>
<reference evidence="20" key="4">
    <citation type="journal article" date="2002" name="Genome Biol.">
        <title>Annotation of the Drosophila melanogaster euchromatic genome: a systematic review.</title>
        <authorList>
            <person name="Misra S."/>
            <person name="Crosby M.A."/>
            <person name="Mungall C.J."/>
            <person name="Matthews B.B."/>
            <person name="Campbell K.S."/>
            <person name="Hradecky P."/>
            <person name="Huang Y."/>
            <person name="Kaminker J.S."/>
            <person name="Millburn G.H."/>
            <person name="Prochnik S.E."/>
            <person name="Smith C.D."/>
            <person name="Tupy J.L."/>
            <person name="Whitfield E.J."/>
            <person name="Bayraktaroglu L."/>
            <person name="Berman B.P."/>
            <person name="Bettencourt B.R."/>
            <person name="Celniker S.E."/>
            <person name="de Grey A.D.N.J."/>
            <person name="Drysdale R.A."/>
            <person name="Harris N.L."/>
            <person name="Richter J."/>
            <person name="Russo S."/>
            <person name="Schroeder A.J."/>
            <person name="Shu S.Q."/>
            <person name="Stapleton M."/>
            <person name="Yamada C."/>
            <person name="Ashburner M."/>
            <person name="Gelbart W.M."/>
            <person name="Rubin G.M."/>
            <person name="Lewis S.E."/>
        </authorList>
    </citation>
    <scope>GENOME REANNOTATION</scope>
    <source>
        <strain evidence="20">Berkeley</strain>
    </source>
</reference>
<reference evidence="16" key="5">
    <citation type="journal article" date="2000" name="Science">
        <title>A Drosophila complementary DNA resource.</title>
        <authorList>
            <person name="Rubin G.M."/>
            <person name="Hong L."/>
            <person name="Brokstein P."/>
            <person name="Evans-Holm M."/>
            <person name="Frise E."/>
            <person name="Stapleton M."/>
            <person name="Harvey D.A."/>
        </authorList>
    </citation>
    <scope>NUCLEOTIDE SEQUENCE [LARGE SCALE MRNA]</scope>
    <source>
        <strain evidence="16">Berkeley</strain>
        <tissue evidence="16">Embryo</tissue>
    </source>
</reference>
<reference evidence="11" key="6">
    <citation type="journal article" date="2007" name="Cell Motil. Cytoskeleton">
        <title>The Drosophila nucleoporin gene nup154 is required for correct microfilament dynamics and cell death during oogenesis.</title>
        <authorList>
            <person name="Riparbelli M.G."/>
            <person name="Gigliotti S."/>
            <person name="Callaini G."/>
        </authorList>
    </citation>
    <scope>FUNCTION</scope>
    <scope>SUBCELLULAR LOCATION</scope>
    <scope>DEVELOPMENTAL STAGE</scope>
</reference>
<reference evidence="11" key="7">
    <citation type="journal article" date="2007" name="Genetics">
        <title>nup154 genetically interacts with cup and plays a cell-type-specific function during Drosophila melanogaster egg-chamber development.</title>
        <authorList>
            <person name="Grimaldi M.R."/>
            <person name="Cozzolino L."/>
            <person name="Malva C."/>
            <person name="Graziani F."/>
            <person name="Gigliotti S."/>
        </authorList>
    </citation>
    <scope>FUNCTION</scope>
    <scope>INTERACTION WITH CUP</scope>
    <scope>SUBCELLULAR LOCATION</scope>
    <scope>DEVELOPMENTAL STAGE</scope>
</reference>
<reference evidence="11" key="8">
    <citation type="journal article" date="2011" name="Tissue Cell">
        <title>Drosophila nucleoporin Nup154 controls cell viability, proliferation and nuclear accumulation of Mad transcription factor.</title>
        <authorList>
            <person name="Colozza G."/>
            <person name="Montembault E."/>
            <person name="Quenerch'du E."/>
            <person name="Riparbelli M.G."/>
            <person name="D'Avino P.P."/>
            <person name="Callaini G."/>
        </authorList>
    </citation>
    <scope>FUNCTION</scope>
    <scope>DISRUPTION PHENOTYPE</scope>
</reference>
<reference evidence="11" key="9">
    <citation type="journal article" date="2012" name="J. Cell Sci.">
        <title>The Nup155-mediated organisation of inner nuclear membrane proteins is independent of Nup155 anchoring to the metazoan nuclear pore complex.</title>
        <authorList>
            <person name="Busayavalasa K."/>
            <person name="Chen X."/>
            <person name="Farrants A.K."/>
            <person name="Wagner N."/>
            <person name="Sabri N."/>
        </authorList>
    </citation>
    <scope>FUNCTION</scope>
    <scope>INTERACTION WITH NUP93-1 AND NUP35</scope>
    <scope>SUBCELLULAR LOCATION</scope>
</reference>
<reference evidence="11" key="10">
    <citation type="journal article" date="2015" name="Genes Dev.">
        <title>A negative loop within the nuclear pore complex controls global chromatin organization.</title>
        <authorList>
            <person name="Breuer M."/>
            <person name="Ohkura H."/>
        </authorList>
    </citation>
    <scope>FUNCTION</scope>
    <scope>DISRUPTION PHENOTYPE</scope>
</reference>
<protein>
    <recommendedName>
        <fullName evidence="11">Nuclear pore complex protein Nup154</fullName>
    </recommendedName>
    <alternativeName>
        <fullName evidence="11">154 kDa nucleoporin</fullName>
    </alternativeName>
    <alternativeName>
        <fullName evidence="10">Nucleoporin Nup154</fullName>
    </alternativeName>
    <alternativeName>
        <fullName evidence="10">Tulipan</fullName>
    </alternativeName>
</protein>